<dbReference type="EC" id="3.6.1.31" evidence="1"/>
<dbReference type="EMBL" id="BX640436">
    <property type="protein sequence ID" value="CAE39553.1"/>
    <property type="molecule type" value="Genomic_DNA"/>
</dbReference>
<dbReference type="RefSeq" id="WP_003815805.1">
    <property type="nucleotide sequence ID" value="NC_002928.3"/>
</dbReference>
<dbReference type="SMR" id="Q7W2X7"/>
<dbReference type="GeneID" id="69599998"/>
<dbReference type="KEGG" id="bpa:BPP4274"/>
<dbReference type="HOGENOM" id="CLU_123337_1_2_4"/>
<dbReference type="UniPathway" id="UPA00031">
    <property type="reaction ID" value="UER00007"/>
</dbReference>
<dbReference type="Proteomes" id="UP000001421">
    <property type="component" value="Chromosome"/>
</dbReference>
<dbReference type="GO" id="GO:0005737">
    <property type="term" value="C:cytoplasm"/>
    <property type="evidence" value="ECO:0007669"/>
    <property type="project" value="UniProtKB-SubCell"/>
</dbReference>
<dbReference type="GO" id="GO:0005524">
    <property type="term" value="F:ATP binding"/>
    <property type="evidence" value="ECO:0007669"/>
    <property type="project" value="UniProtKB-KW"/>
</dbReference>
<dbReference type="GO" id="GO:0004636">
    <property type="term" value="F:phosphoribosyl-ATP diphosphatase activity"/>
    <property type="evidence" value="ECO:0007669"/>
    <property type="project" value="UniProtKB-UniRule"/>
</dbReference>
<dbReference type="GO" id="GO:0000105">
    <property type="term" value="P:L-histidine biosynthetic process"/>
    <property type="evidence" value="ECO:0007669"/>
    <property type="project" value="UniProtKB-UniRule"/>
</dbReference>
<dbReference type="CDD" id="cd11534">
    <property type="entry name" value="NTP-PPase_HisIE_like"/>
    <property type="match status" value="1"/>
</dbReference>
<dbReference type="Gene3D" id="1.10.287.1080">
    <property type="entry name" value="MazG-like"/>
    <property type="match status" value="1"/>
</dbReference>
<dbReference type="HAMAP" id="MF_01020">
    <property type="entry name" value="HisE"/>
    <property type="match status" value="1"/>
</dbReference>
<dbReference type="InterPro" id="IPR008179">
    <property type="entry name" value="HisE"/>
</dbReference>
<dbReference type="InterPro" id="IPR021130">
    <property type="entry name" value="PRib-ATP_PPHydrolase-like"/>
</dbReference>
<dbReference type="NCBIfam" id="TIGR03188">
    <property type="entry name" value="histidine_hisI"/>
    <property type="match status" value="1"/>
</dbReference>
<dbReference type="NCBIfam" id="NF001611">
    <property type="entry name" value="PRK00400.1-3"/>
    <property type="match status" value="1"/>
</dbReference>
<dbReference type="PANTHER" id="PTHR42945">
    <property type="entry name" value="HISTIDINE BIOSYNTHESIS BIFUNCTIONAL PROTEIN"/>
    <property type="match status" value="1"/>
</dbReference>
<dbReference type="PANTHER" id="PTHR42945:SF9">
    <property type="entry name" value="HISTIDINE BIOSYNTHESIS BIFUNCTIONAL PROTEIN HISIE"/>
    <property type="match status" value="1"/>
</dbReference>
<dbReference type="Pfam" id="PF01503">
    <property type="entry name" value="PRA-PH"/>
    <property type="match status" value="1"/>
</dbReference>
<dbReference type="SUPFAM" id="SSF101386">
    <property type="entry name" value="all-alpha NTP pyrophosphatases"/>
    <property type="match status" value="1"/>
</dbReference>
<reference key="1">
    <citation type="journal article" date="2003" name="Nat. Genet.">
        <title>Comparative analysis of the genome sequences of Bordetella pertussis, Bordetella parapertussis and Bordetella bronchiseptica.</title>
        <authorList>
            <person name="Parkhill J."/>
            <person name="Sebaihia M."/>
            <person name="Preston A."/>
            <person name="Murphy L.D."/>
            <person name="Thomson N.R."/>
            <person name="Harris D.E."/>
            <person name="Holden M.T.G."/>
            <person name="Churcher C.M."/>
            <person name="Bentley S.D."/>
            <person name="Mungall K.L."/>
            <person name="Cerdeno-Tarraga A.-M."/>
            <person name="Temple L."/>
            <person name="James K.D."/>
            <person name="Harris B."/>
            <person name="Quail M.A."/>
            <person name="Achtman M."/>
            <person name="Atkin R."/>
            <person name="Baker S."/>
            <person name="Basham D."/>
            <person name="Bason N."/>
            <person name="Cherevach I."/>
            <person name="Chillingworth T."/>
            <person name="Collins M."/>
            <person name="Cronin A."/>
            <person name="Davis P."/>
            <person name="Doggett J."/>
            <person name="Feltwell T."/>
            <person name="Goble A."/>
            <person name="Hamlin N."/>
            <person name="Hauser H."/>
            <person name="Holroyd S."/>
            <person name="Jagels K."/>
            <person name="Leather S."/>
            <person name="Moule S."/>
            <person name="Norberczak H."/>
            <person name="O'Neil S."/>
            <person name="Ormond D."/>
            <person name="Price C."/>
            <person name="Rabbinowitsch E."/>
            <person name="Rutter S."/>
            <person name="Sanders M."/>
            <person name="Saunders D."/>
            <person name="Seeger K."/>
            <person name="Sharp S."/>
            <person name="Simmonds M."/>
            <person name="Skelton J."/>
            <person name="Squares R."/>
            <person name="Squares S."/>
            <person name="Stevens K."/>
            <person name="Unwin L."/>
            <person name="Whitehead S."/>
            <person name="Barrell B.G."/>
            <person name="Maskell D.J."/>
        </authorList>
    </citation>
    <scope>NUCLEOTIDE SEQUENCE [LARGE SCALE GENOMIC DNA]</scope>
    <source>
        <strain>12822 / ATCC BAA-587 / NCTC 13253</strain>
    </source>
</reference>
<feature type="chain" id="PRO_0000136348" description="Phosphoribosyl-ATP pyrophosphatase">
    <location>
        <begin position="1"/>
        <end position="115"/>
    </location>
</feature>
<name>HIS2_BORPA</name>
<gene>
    <name evidence="1" type="primary">hisE</name>
    <name type="ordered locus">BPP4274</name>
</gene>
<evidence type="ECO:0000255" key="1">
    <source>
        <dbReference type="HAMAP-Rule" id="MF_01020"/>
    </source>
</evidence>
<sequence>MTTPTAGDDILSRIADTLATRRPEAGGDPQSSYVAKLLSKAPDAFLKKIGEEATELVMAAKDGQPDRIISETADLWFHCLVALTHYNLRPEDVLAELARREGLSGLEEKARRPRD</sequence>
<accession>Q7W2X7</accession>
<organism>
    <name type="scientific">Bordetella parapertussis (strain 12822 / ATCC BAA-587 / NCTC 13253)</name>
    <dbReference type="NCBI Taxonomy" id="257311"/>
    <lineage>
        <taxon>Bacteria</taxon>
        <taxon>Pseudomonadati</taxon>
        <taxon>Pseudomonadota</taxon>
        <taxon>Betaproteobacteria</taxon>
        <taxon>Burkholderiales</taxon>
        <taxon>Alcaligenaceae</taxon>
        <taxon>Bordetella</taxon>
    </lineage>
</organism>
<protein>
    <recommendedName>
        <fullName evidence="1">Phosphoribosyl-ATP pyrophosphatase</fullName>
        <shortName evidence="1">PRA-PH</shortName>
        <ecNumber evidence="1">3.6.1.31</ecNumber>
    </recommendedName>
</protein>
<comment type="catalytic activity">
    <reaction evidence="1">
        <text>1-(5-phospho-beta-D-ribosyl)-ATP + H2O = 1-(5-phospho-beta-D-ribosyl)-5'-AMP + diphosphate + H(+)</text>
        <dbReference type="Rhea" id="RHEA:22828"/>
        <dbReference type="ChEBI" id="CHEBI:15377"/>
        <dbReference type="ChEBI" id="CHEBI:15378"/>
        <dbReference type="ChEBI" id="CHEBI:33019"/>
        <dbReference type="ChEBI" id="CHEBI:59457"/>
        <dbReference type="ChEBI" id="CHEBI:73183"/>
        <dbReference type="EC" id="3.6.1.31"/>
    </reaction>
</comment>
<comment type="pathway">
    <text evidence="1">Amino-acid biosynthesis; L-histidine biosynthesis; L-histidine from 5-phospho-alpha-D-ribose 1-diphosphate: step 2/9.</text>
</comment>
<comment type="subcellular location">
    <subcellularLocation>
        <location evidence="1">Cytoplasm</location>
    </subcellularLocation>
</comment>
<comment type="similarity">
    <text evidence="1">Belongs to the PRA-PH family.</text>
</comment>
<keyword id="KW-0028">Amino-acid biosynthesis</keyword>
<keyword id="KW-0067">ATP-binding</keyword>
<keyword id="KW-0963">Cytoplasm</keyword>
<keyword id="KW-0368">Histidine biosynthesis</keyword>
<keyword id="KW-0378">Hydrolase</keyword>
<keyword id="KW-0547">Nucleotide-binding</keyword>
<proteinExistence type="inferred from homology"/>